<reference key="1">
    <citation type="journal article" date="2000" name="Plant J.">
        <title>Differential regulation of three functional ammonium transporter genes by nitrogen in root hairs and by light in leaves of tomato.</title>
        <authorList>
            <person name="von Wiren N."/>
            <person name="Lauter F.-R."/>
            <person name="Ninnemann O."/>
            <person name="Gillissen B."/>
            <person name="Walch-Liu P."/>
            <person name="Engels C."/>
            <person name="Jost W."/>
            <person name="Frommer W.B."/>
        </authorList>
    </citation>
    <scope>NUCLEOTIDE SEQUENCE [MRNA]</scope>
    <scope>FUNCTION</scope>
    <scope>INDUCTION</scope>
    <source>
        <tissue>Leaf</tissue>
    </source>
</reference>
<name>AMT13_SOLLC</name>
<sequence>MDSSWEASVTDSINAIYLLFSAYLVFVMQLGFAMLCAGSVRAKNAMNIMLTNVVDAVVGSLSYYLFGFAFAFGDSNPFIGASYFALKDIPSSSYDYSFFLYQWAFAIAVAGITSGSIAERTQFTAYLVFSFFLTGFVYPVVAHWLWSSNGWLSPNSTYLLFGSGAIDFAGSGVVHLVGGIAGFWGSIVEGPRVGRFDAFGNPVKMRGHNATLVVLGTLLLWFGWFGFNPGSFNKILVAYPHMADQGNWTSVGRTAVTTTLAGSTAGIVTLFGRRLLVGHWDAMDVCNGVLGGFVAITSGCSVVEPWAAILCGFCAAWVLIGLNILALKFKFDDPLEAAQLHGGCGAWGLIFTGLFAKEEFVLQAYNSGKTQIIRPSGLILGGGWGLFGAQIVELLSIVVWVSLTMGPLFYLLQKLGILRISSDEEVAGLDISSHGGYAYDASQEESNARFYGEYLRMQQQ</sequence>
<keyword id="KW-0924">Ammonia transport</keyword>
<keyword id="KW-0472">Membrane</keyword>
<keyword id="KW-1185">Reference proteome</keyword>
<keyword id="KW-0812">Transmembrane</keyword>
<keyword id="KW-1133">Transmembrane helix</keyword>
<keyword id="KW-0813">Transport</keyword>
<evidence type="ECO:0000255" key="1"/>
<evidence type="ECO:0000269" key="2">
    <source>
    </source>
</evidence>
<evidence type="ECO:0000305" key="3"/>
<protein>
    <recommendedName>
        <fullName>Ammonium transporter 1 member 3</fullName>
    </recommendedName>
    <alternativeName>
        <fullName>LeAMT1;3</fullName>
    </alternativeName>
</protein>
<gene>
    <name type="primary">AMT1-3</name>
</gene>
<proteinExistence type="evidence at transcript level"/>
<dbReference type="EMBL" id="AF118858">
    <property type="protein sequence ID" value="AAG11397.1"/>
    <property type="molecule type" value="mRNA"/>
</dbReference>
<dbReference type="RefSeq" id="NP_001234216.1">
    <property type="nucleotide sequence ID" value="NM_001247287.1"/>
</dbReference>
<dbReference type="SMR" id="Q9FVN0"/>
<dbReference type="STRING" id="4081.Q9FVN0"/>
<dbReference type="PaxDb" id="4081-Solyc03g045070.1.1"/>
<dbReference type="EnsemblPlants" id="Solyc03g045070.1.1">
    <property type="protein sequence ID" value="Solyc03g045070.1.1.1"/>
    <property type="gene ID" value="Solyc03g045070.1"/>
</dbReference>
<dbReference type="GeneID" id="543590"/>
<dbReference type="Gramene" id="Solyc03g045070.1.1">
    <property type="protein sequence ID" value="Solyc03g045070.1.1.1"/>
    <property type="gene ID" value="Solyc03g045070.1"/>
</dbReference>
<dbReference type="KEGG" id="sly:543590"/>
<dbReference type="eggNOG" id="KOG0682">
    <property type="taxonomic scope" value="Eukaryota"/>
</dbReference>
<dbReference type="HOGENOM" id="CLU_000445_33_1_1"/>
<dbReference type="InParanoid" id="Q9FVN0"/>
<dbReference type="OMA" id="NVMMKNM"/>
<dbReference type="OrthoDB" id="534912at2759"/>
<dbReference type="PhylomeDB" id="Q9FVN0"/>
<dbReference type="Proteomes" id="UP000004994">
    <property type="component" value="Chromosome 3"/>
</dbReference>
<dbReference type="GO" id="GO:0005886">
    <property type="term" value="C:plasma membrane"/>
    <property type="evidence" value="ECO:0000318"/>
    <property type="project" value="GO_Central"/>
</dbReference>
<dbReference type="GO" id="GO:0008519">
    <property type="term" value="F:ammonium channel activity"/>
    <property type="evidence" value="ECO:0000318"/>
    <property type="project" value="GO_Central"/>
</dbReference>
<dbReference type="GO" id="GO:0097272">
    <property type="term" value="P:ammonium homeostasis"/>
    <property type="evidence" value="ECO:0000318"/>
    <property type="project" value="GO_Central"/>
</dbReference>
<dbReference type="GO" id="GO:0072488">
    <property type="term" value="P:ammonium transmembrane transport"/>
    <property type="evidence" value="ECO:0000316"/>
    <property type="project" value="UniProtKB"/>
</dbReference>
<dbReference type="FunFam" id="1.10.3430.10:FF:000006">
    <property type="entry name" value="Ammonium transporter"/>
    <property type="match status" value="1"/>
</dbReference>
<dbReference type="Gene3D" id="1.10.3430.10">
    <property type="entry name" value="Ammonium transporter AmtB like domains"/>
    <property type="match status" value="1"/>
</dbReference>
<dbReference type="InterPro" id="IPR029020">
    <property type="entry name" value="Ammonium/urea_transptr"/>
</dbReference>
<dbReference type="InterPro" id="IPR001905">
    <property type="entry name" value="Ammonium_transpt"/>
</dbReference>
<dbReference type="InterPro" id="IPR018047">
    <property type="entry name" value="Ammonium_transpt_CS"/>
</dbReference>
<dbReference type="InterPro" id="IPR024041">
    <property type="entry name" value="NH4_transpt_AmtB-like_dom"/>
</dbReference>
<dbReference type="NCBIfam" id="TIGR00836">
    <property type="entry name" value="amt"/>
    <property type="match status" value="1"/>
</dbReference>
<dbReference type="PANTHER" id="PTHR11730">
    <property type="entry name" value="AMMONIUM TRANSPORTER"/>
    <property type="match status" value="1"/>
</dbReference>
<dbReference type="PANTHER" id="PTHR11730:SF95">
    <property type="entry name" value="AMMONIUM TRANSPORTER 1 MEMBER 3"/>
    <property type="match status" value="1"/>
</dbReference>
<dbReference type="Pfam" id="PF00909">
    <property type="entry name" value="Ammonium_transp"/>
    <property type="match status" value="1"/>
</dbReference>
<dbReference type="SUPFAM" id="SSF111352">
    <property type="entry name" value="Ammonium transporter"/>
    <property type="match status" value="1"/>
</dbReference>
<dbReference type="PROSITE" id="PS01219">
    <property type="entry name" value="AMMONIUM_TRANSP"/>
    <property type="match status" value="1"/>
</dbReference>
<organism>
    <name type="scientific">Solanum lycopersicum</name>
    <name type="common">Tomato</name>
    <name type="synonym">Lycopersicon esculentum</name>
    <dbReference type="NCBI Taxonomy" id="4081"/>
    <lineage>
        <taxon>Eukaryota</taxon>
        <taxon>Viridiplantae</taxon>
        <taxon>Streptophyta</taxon>
        <taxon>Embryophyta</taxon>
        <taxon>Tracheophyta</taxon>
        <taxon>Spermatophyta</taxon>
        <taxon>Magnoliopsida</taxon>
        <taxon>eudicotyledons</taxon>
        <taxon>Gunneridae</taxon>
        <taxon>Pentapetalae</taxon>
        <taxon>asterids</taxon>
        <taxon>lamiids</taxon>
        <taxon>Solanales</taxon>
        <taxon>Solanaceae</taxon>
        <taxon>Solanoideae</taxon>
        <taxon>Solaneae</taxon>
        <taxon>Solanum</taxon>
        <taxon>Solanum subgen. Lycopersicon</taxon>
    </lineage>
</organism>
<feature type="chain" id="PRO_0000139750" description="Ammonium transporter 1 member 3">
    <location>
        <begin position="1"/>
        <end position="460"/>
    </location>
</feature>
<feature type="transmembrane region" description="Helical" evidence="1">
    <location>
        <begin position="15"/>
        <end position="37"/>
    </location>
</feature>
<feature type="transmembrane region" description="Helical" evidence="1">
    <location>
        <begin position="50"/>
        <end position="72"/>
    </location>
</feature>
<feature type="transmembrane region" description="Helical" evidence="1">
    <location>
        <begin position="98"/>
        <end position="117"/>
    </location>
</feature>
<feature type="transmembrane region" description="Helical" evidence="1">
    <location>
        <begin position="124"/>
        <end position="146"/>
    </location>
</feature>
<feature type="transmembrane region" description="Helical" evidence="1">
    <location>
        <begin position="166"/>
        <end position="188"/>
    </location>
</feature>
<feature type="transmembrane region" description="Helical" evidence="1">
    <location>
        <begin position="209"/>
        <end position="227"/>
    </location>
</feature>
<feature type="transmembrane region" description="Helical" evidence="1">
    <location>
        <begin position="255"/>
        <end position="277"/>
    </location>
</feature>
<feature type="transmembrane region" description="Helical" evidence="1">
    <location>
        <begin position="305"/>
        <end position="327"/>
    </location>
</feature>
<feature type="transmembrane region" description="Helical" evidence="1">
    <location>
        <begin position="337"/>
        <end position="356"/>
    </location>
</feature>
<feature type="transmembrane region" description="Helical" evidence="1">
    <location>
        <begin position="377"/>
        <end position="399"/>
    </location>
</feature>
<comment type="function">
    <text evidence="2">Ammonium transporter that may be involved in ammonium transport throughout the plant.</text>
</comment>
<comment type="subcellular location">
    <subcellularLocation>
        <location evidence="3">Membrane</location>
        <topology evidence="3">Multi-pass membrane protein</topology>
    </subcellularLocation>
</comment>
<comment type="tissue specificity">
    <text>Leaves.</text>
</comment>
<comment type="induction">
    <text evidence="2">Highest expression in darkness.</text>
</comment>
<comment type="similarity">
    <text evidence="3">Belongs to the ammonia transporter channel (TC 1.A.11.2) family.</text>
</comment>
<accession>Q9FVN0</accession>